<comment type="function">
    <text evidence="4 5">Involved in the biogenesis of cilia (PubMed:20551181). Required for the recruitment of PLK1 to centrosomes and S phase progression (PubMed:24018379).</text>
</comment>
<comment type="subunit">
    <text evidence="4 5 6">Homooligomer; probably required for localization to centrosomes (PubMed:20551181). Forms a complex with KIAA0753/OFIP and OFD1; within this complex may stabilize the interaction between OFD1 and KIAA0753/OFIP (PubMed:26643951). Interacts with PCM1; this interaction may be mediated by KIAA0753/OFIP (PubMed:26643951). Interacts with PLK1 in later G1, S, G2 and M phases of the cell cycle; this interaction recruits PLK1 to centrosomes (PubMed:24018379).</text>
</comment>
<comment type="interaction">
    <interactant intactId="EBI-2872654">
        <id>Q96NB1</id>
    </interactant>
    <interactant intactId="EBI-744311">
        <id>Q8IYX3</id>
        <label>CCDC116</label>
    </interactant>
    <organismsDiffer>false</organismsDiffer>
    <experiments>3</experiments>
</comment>
<comment type="interaction">
    <interactant intactId="EBI-2872654">
        <id>Q96NB1</id>
    </interactant>
    <interactant intactId="EBI-2872654">
        <id>Q96NB1</id>
        <label>CEP20</label>
    </interactant>
    <organismsDiffer>false</organismsDiffer>
    <experiments>13</experiments>
</comment>
<comment type="subcellular location">
    <subcellularLocation>
        <location evidence="6">Cytoplasm</location>
        <location evidence="6">Cytoskeleton</location>
        <location evidence="6">Microtubule organizing center</location>
        <location evidence="6">Centrosome</location>
        <location evidence="6">Centriole</location>
    </subcellularLocation>
    <subcellularLocation>
        <location evidence="1">Cell projection</location>
        <location evidence="1">Cilium</location>
    </subcellularLocation>
    <subcellularLocation>
        <location evidence="1">Cytoplasm</location>
        <location evidence="1">Cytoskeleton</location>
        <location evidence="1">Cilium basal body</location>
    </subcellularLocation>
    <subcellularLocation>
        <location evidence="4 5">Cytoplasm</location>
        <location evidence="4 5">Cytoskeleton</location>
        <location evidence="4 5">Microtubule organizing center</location>
        <location evidence="4 5">Centrosome</location>
    </subcellularLocation>
    <subcellularLocation>
        <location evidence="4">Cytoplasmic granule</location>
    </subcellularLocation>
    <subcellularLocation>
        <location evidence="4 6">Cytoplasm</location>
        <location evidence="4 6">Cytoskeleton</location>
        <location evidence="4 6">Microtubule organizing center</location>
        <location evidence="4 6">Centrosome</location>
        <location evidence="4 6">Centriolar satellite</location>
    </subcellularLocation>
    <text evidence="5 6">Localizes to the centrosome throughout cell cycle progression (PubMed:24018379). Localization to centrioles and pericentriolar satellites may be mediated by KIAA0753/OFIP (PubMed:26643951).</text>
</comment>
<comment type="alternative products">
    <event type="alternative splicing"/>
    <isoform>
        <id>Q96NB1-1</id>
        <name>1</name>
        <sequence type="displayed"/>
    </isoform>
    <isoform>
        <id>Q96NB1-2</id>
        <name>2</name>
        <sequence type="described" ref="VSP_056998"/>
    </isoform>
</comment>
<comment type="tissue specificity">
    <text evidence="4">Widely expressed. Detected in brain, heart, kidney, liver, lung, skeletal muscle, placenta and intestine.</text>
</comment>
<comment type="similarity">
    <text evidence="8">Belongs to the CEP43 family.</text>
</comment>
<accession>Q96NB1</accession>
<accession>B3KPU9</accession>
<sequence length="174" mass="19778">MATVAELKAVLKDTLEKKGVLGHLKARIRAEVFNALDDDREPRPSLSHENLLINELIREYLEFNKYKYTASVLIAESGQPVVPLDRQFLIHELNAFEESKDNTIPLLYGILAHFLRGTKDGIQNAFLKGPSLQPSDPSLGRQPSRRKPMDDHLRKEEQKSTNIEDLHVSQAVNR</sequence>
<gene>
    <name evidence="9" type="primary">CEP20</name>
    <name type="synonym">C16orf63</name>
    <name type="synonym">FOPNL</name>
    <name type="synonym">FOR20</name>
    <name type="synonym">PHSECRG2</name>
</gene>
<proteinExistence type="evidence at protein level"/>
<evidence type="ECO:0000250" key="1"/>
<evidence type="ECO:0000255" key="2">
    <source>
        <dbReference type="PROSITE-ProRule" id="PRU00126"/>
    </source>
</evidence>
<evidence type="ECO:0000256" key="3">
    <source>
        <dbReference type="SAM" id="MobiDB-lite"/>
    </source>
</evidence>
<evidence type="ECO:0000269" key="4">
    <source>
    </source>
</evidence>
<evidence type="ECO:0000269" key="5">
    <source>
    </source>
</evidence>
<evidence type="ECO:0000269" key="6">
    <source>
    </source>
</evidence>
<evidence type="ECO:0000303" key="7">
    <source>
    </source>
</evidence>
<evidence type="ECO:0000305" key="8"/>
<evidence type="ECO:0000312" key="9">
    <source>
        <dbReference type="HGNC" id="HGNC:26435"/>
    </source>
</evidence>
<evidence type="ECO:0007744" key="10">
    <source>
    </source>
</evidence>
<organism>
    <name type="scientific">Homo sapiens</name>
    <name type="common">Human</name>
    <dbReference type="NCBI Taxonomy" id="9606"/>
    <lineage>
        <taxon>Eukaryota</taxon>
        <taxon>Metazoa</taxon>
        <taxon>Chordata</taxon>
        <taxon>Craniata</taxon>
        <taxon>Vertebrata</taxon>
        <taxon>Euteleostomi</taxon>
        <taxon>Mammalia</taxon>
        <taxon>Eutheria</taxon>
        <taxon>Euarchontoglires</taxon>
        <taxon>Primates</taxon>
        <taxon>Haplorrhini</taxon>
        <taxon>Catarrhini</taxon>
        <taxon>Hominidae</taxon>
        <taxon>Homo</taxon>
    </lineage>
</organism>
<protein>
    <recommendedName>
        <fullName evidence="8">Centrosomal protein 20</fullName>
    </recommendedName>
    <alternativeName>
        <fullName>FGFR1OP N-terminal-like protein</fullName>
    </alternativeName>
    <alternativeName>
        <fullName>FOP-related protein of 20 kDa</fullName>
    </alternativeName>
    <alternativeName>
        <fullName>LisH domain-containing protein FOPNL</fullName>
    </alternativeName>
</protein>
<feature type="chain" id="PRO_0000264465" description="Centrosomal protein 20">
    <location>
        <begin position="1"/>
        <end position="174"/>
    </location>
</feature>
<feature type="domain" description="LisH" evidence="2">
    <location>
        <begin position="49"/>
        <end position="81"/>
    </location>
</feature>
<feature type="region of interest" description="Necessary and sufficient for homooligomerization and localization to centrosomes and pericentriolar satellites">
    <location>
        <begin position="1"/>
        <end position="104"/>
    </location>
</feature>
<feature type="region of interest" description="Disordered" evidence="3">
    <location>
        <begin position="129"/>
        <end position="174"/>
    </location>
</feature>
<feature type="compositionally biased region" description="Basic and acidic residues" evidence="3">
    <location>
        <begin position="147"/>
        <end position="167"/>
    </location>
</feature>
<feature type="modified residue" description="Phosphoserine" evidence="10">
    <location>
        <position position="144"/>
    </location>
</feature>
<feature type="splice variant" id="VSP_056998" description="In isoform 2." evidence="7">
    <location>
        <begin position="76"/>
        <end position="149"/>
    </location>
</feature>
<feature type="mutagenesis site" description="Loss of homooligomerization and loss of localization to centrosomes and pericentriolar satellites; when associated with A-76." evidence="4">
    <original>E</original>
    <variation>A</variation>
    <location>
        <position position="49"/>
    </location>
</feature>
<feature type="mutagenesis site" description="Strongly decreased interaction with KIAA0753; when associated with A-76." evidence="6">
    <original>E</original>
    <variation>A</variation>
    <location>
        <position position="49"/>
    </location>
</feature>
<feature type="mutagenesis site" description="Loss of interaction with KIAA0753; when associated with A-76." evidence="6">
    <original>I</original>
    <variation>Q</variation>
    <location>
        <position position="53"/>
    </location>
</feature>
<feature type="mutagenesis site" description="Loss of homooligomerization and loss of localization to centrosomes and pericentriolar satellites; when associated with A-49." evidence="4">
    <original>E</original>
    <variation>A</variation>
    <location>
        <position position="76"/>
    </location>
</feature>
<feature type="mutagenesis site" description="Strongly decreased interaction with KIAA0753; when associated with A-49. Loss of interaction with KIAA0753; when associated with Q-53." evidence="6">
    <original>E</original>
    <variation>A</variation>
    <location>
        <position position="76"/>
    </location>
</feature>
<feature type="mutagenesis site" description="No effect on interaction with KIAA0753." evidence="6">
    <original>L</original>
    <variation>R</variation>
    <location>
        <position position="106"/>
    </location>
</feature>
<reference key="1">
    <citation type="submission" date="2003-12" db="EMBL/GenBank/DDBJ databases">
        <title>The cloning and functional analysis of PHSECRG2 gene.</title>
        <authorList>
            <person name="Du J."/>
            <person name="Nie Z."/>
            <person name="Lin G."/>
            <person name="Lu G."/>
        </authorList>
    </citation>
    <scope>NUCLEOTIDE SEQUENCE [MRNA] (ISOFORM 1)</scope>
</reference>
<reference key="2">
    <citation type="journal article" date="2004" name="Nat. Genet.">
        <title>Complete sequencing and characterization of 21,243 full-length human cDNAs.</title>
        <authorList>
            <person name="Ota T."/>
            <person name="Suzuki Y."/>
            <person name="Nishikawa T."/>
            <person name="Otsuki T."/>
            <person name="Sugiyama T."/>
            <person name="Irie R."/>
            <person name="Wakamatsu A."/>
            <person name="Hayashi K."/>
            <person name="Sato H."/>
            <person name="Nagai K."/>
            <person name="Kimura K."/>
            <person name="Makita H."/>
            <person name="Sekine M."/>
            <person name="Obayashi M."/>
            <person name="Nishi T."/>
            <person name="Shibahara T."/>
            <person name="Tanaka T."/>
            <person name="Ishii S."/>
            <person name="Yamamoto J."/>
            <person name="Saito K."/>
            <person name="Kawai Y."/>
            <person name="Isono Y."/>
            <person name="Nakamura Y."/>
            <person name="Nagahari K."/>
            <person name="Murakami K."/>
            <person name="Yasuda T."/>
            <person name="Iwayanagi T."/>
            <person name="Wagatsuma M."/>
            <person name="Shiratori A."/>
            <person name="Sudo H."/>
            <person name="Hosoiri T."/>
            <person name="Kaku Y."/>
            <person name="Kodaira H."/>
            <person name="Kondo H."/>
            <person name="Sugawara M."/>
            <person name="Takahashi M."/>
            <person name="Kanda K."/>
            <person name="Yokoi T."/>
            <person name="Furuya T."/>
            <person name="Kikkawa E."/>
            <person name="Omura Y."/>
            <person name="Abe K."/>
            <person name="Kamihara K."/>
            <person name="Katsuta N."/>
            <person name="Sato K."/>
            <person name="Tanikawa M."/>
            <person name="Yamazaki M."/>
            <person name="Ninomiya K."/>
            <person name="Ishibashi T."/>
            <person name="Yamashita H."/>
            <person name="Murakawa K."/>
            <person name="Fujimori K."/>
            <person name="Tanai H."/>
            <person name="Kimata M."/>
            <person name="Watanabe M."/>
            <person name="Hiraoka S."/>
            <person name="Chiba Y."/>
            <person name="Ishida S."/>
            <person name="Ono Y."/>
            <person name="Takiguchi S."/>
            <person name="Watanabe S."/>
            <person name="Yosida M."/>
            <person name="Hotuta T."/>
            <person name="Kusano J."/>
            <person name="Kanehori K."/>
            <person name="Takahashi-Fujii A."/>
            <person name="Hara H."/>
            <person name="Tanase T.-O."/>
            <person name="Nomura Y."/>
            <person name="Togiya S."/>
            <person name="Komai F."/>
            <person name="Hara R."/>
            <person name="Takeuchi K."/>
            <person name="Arita M."/>
            <person name="Imose N."/>
            <person name="Musashino K."/>
            <person name="Yuuki H."/>
            <person name="Oshima A."/>
            <person name="Sasaki N."/>
            <person name="Aotsuka S."/>
            <person name="Yoshikawa Y."/>
            <person name="Matsunawa H."/>
            <person name="Ichihara T."/>
            <person name="Shiohata N."/>
            <person name="Sano S."/>
            <person name="Moriya S."/>
            <person name="Momiyama H."/>
            <person name="Satoh N."/>
            <person name="Takami S."/>
            <person name="Terashima Y."/>
            <person name="Suzuki O."/>
            <person name="Nakagawa S."/>
            <person name="Senoh A."/>
            <person name="Mizoguchi H."/>
            <person name="Goto Y."/>
            <person name="Shimizu F."/>
            <person name="Wakebe H."/>
            <person name="Hishigaki H."/>
            <person name="Watanabe T."/>
            <person name="Sugiyama A."/>
            <person name="Takemoto M."/>
            <person name="Kawakami B."/>
            <person name="Yamazaki M."/>
            <person name="Watanabe K."/>
            <person name="Kumagai A."/>
            <person name="Itakura S."/>
            <person name="Fukuzumi Y."/>
            <person name="Fujimori Y."/>
            <person name="Komiyama M."/>
            <person name="Tashiro H."/>
            <person name="Tanigami A."/>
            <person name="Fujiwara T."/>
            <person name="Ono T."/>
            <person name="Yamada K."/>
            <person name="Fujii Y."/>
            <person name="Ozaki K."/>
            <person name="Hirao M."/>
            <person name="Ohmori Y."/>
            <person name="Kawabata A."/>
            <person name="Hikiji T."/>
            <person name="Kobatake N."/>
            <person name="Inagaki H."/>
            <person name="Ikema Y."/>
            <person name="Okamoto S."/>
            <person name="Okitani R."/>
            <person name="Kawakami T."/>
            <person name="Noguchi S."/>
            <person name="Itoh T."/>
            <person name="Shigeta K."/>
            <person name="Senba T."/>
            <person name="Matsumura K."/>
            <person name="Nakajima Y."/>
            <person name="Mizuno T."/>
            <person name="Morinaga M."/>
            <person name="Sasaki M."/>
            <person name="Togashi T."/>
            <person name="Oyama M."/>
            <person name="Hata H."/>
            <person name="Watanabe M."/>
            <person name="Komatsu T."/>
            <person name="Mizushima-Sugano J."/>
            <person name="Satoh T."/>
            <person name="Shirai Y."/>
            <person name="Takahashi Y."/>
            <person name="Nakagawa K."/>
            <person name="Okumura K."/>
            <person name="Nagase T."/>
            <person name="Nomura N."/>
            <person name="Kikuchi H."/>
            <person name="Masuho Y."/>
            <person name="Yamashita R."/>
            <person name="Nakai K."/>
            <person name="Yada T."/>
            <person name="Nakamura Y."/>
            <person name="Ohara O."/>
            <person name="Isogai T."/>
            <person name="Sugano S."/>
        </authorList>
    </citation>
    <scope>NUCLEOTIDE SEQUENCE [LARGE SCALE MRNA] (ISOFORMS 1 AND 2)</scope>
    <source>
        <tissue>Placenta</tissue>
    </source>
</reference>
<reference key="3">
    <citation type="journal article" date="2004" name="Nature">
        <title>The sequence and analysis of duplication-rich human chromosome 16.</title>
        <authorList>
            <person name="Martin J."/>
            <person name="Han C."/>
            <person name="Gordon L.A."/>
            <person name="Terry A."/>
            <person name="Prabhakar S."/>
            <person name="She X."/>
            <person name="Xie G."/>
            <person name="Hellsten U."/>
            <person name="Chan Y.M."/>
            <person name="Altherr M."/>
            <person name="Couronne O."/>
            <person name="Aerts A."/>
            <person name="Bajorek E."/>
            <person name="Black S."/>
            <person name="Blumer H."/>
            <person name="Branscomb E."/>
            <person name="Brown N.C."/>
            <person name="Bruno W.J."/>
            <person name="Buckingham J.M."/>
            <person name="Callen D.F."/>
            <person name="Campbell C.S."/>
            <person name="Campbell M.L."/>
            <person name="Campbell E.W."/>
            <person name="Caoile C."/>
            <person name="Challacombe J.F."/>
            <person name="Chasteen L.A."/>
            <person name="Chertkov O."/>
            <person name="Chi H.C."/>
            <person name="Christensen M."/>
            <person name="Clark L.M."/>
            <person name="Cohn J.D."/>
            <person name="Denys M."/>
            <person name="Detter J.C."/>
            <person name="Dickson M."/>
            <person name="Dimitrijevic-Bussod M."/>
            <person name="Escobar J."/>
            <person name="Fawcett J.J."/>
            <person name="Flowers D."/>
            <person name="Fotopulos D."/>
            <person name="Glavina T."/>
            <person name="Gomez M."/>
            <person name="Gonzales E."/>
            <person name="Goodstein D."/>
            <person name="Goodwin L.A."/>
            <person name="Grady D.L."/>
            <person name="Grigoriev I."/>
            <person name="Groza M."/>
            <person name="Hammon N."/>
            <person name="Hawkins T."/>
            <person name="Haydu L."/>
            <person name="Hildebrand C.E."/>
            <person name="Huang W."/>
            <person name="Israni S."/>
            <person name="Jett J."/>
            <person name="Jewett P.B."/>
            <person name="Kadner K."/>
            <person name="Kimball H."/>
            <person name="Kobayashi A."/>
            <person name="Krawczyk M.-C."/>
            <person name="Leyba T."/>
            <person name="Longmire J.L."/>
            <person name="Lopez F."/>
            <person name="Lou Y."/>
            <person name="Lowry S."/>
            <person name="Ludeman T."/>
            <person name="Manohar C.F."/>
            <person name="Mark G.A."/>
            <person name="McMurray K.L."/>
            <person name="Meincke L.J."/>
            <person name="Morgan J."/>
            <person name="Moyzis R.K."/>
            <person name="Mundt M.O."/>
            <person name="Munk A.C."/>
            <person name="Nandkeshwar R.D."/>
            <person name="Pitluck S."/>
            <person name="Pollard M."/>
            <person name="Predki P."/>
            <person name="Parson-Quintana B."/>
            <person name="Ramirez L."/>
            <person name="Rash S."/>
            <person name="Retterer J."/>
            <person name="Ricke D.O."/>
            <person name="Robinson D.L."/>
            <person name="Rodriguez A."/>
            <person name="Salamov A."/>
            <person name="Saunders E.H."/>
            <person name="Scott D."/>
            <person name="Shough T."/>
            <person name="Stallings R.L."/>
            <person name="Stalvey M."/>
            <person name="Sutherland R.D."/>
            <person name="Tapia R."/>
            <person name="Tesmer J.G."/>
            <person name="Thayer N."/>
            <person name="Thompson L.S."/>
            <person name="Tice H."/>
            <person name="Torney D.C."/>
            <person name="Tran-Gyamfi M."/>
            <person name="Tsai M."/>
            <person name="Ulanovsky L.E."/>
            <person name="Ustaszewska A."/>
            <person name="Vo N."/>
            <person name="White P.S."/>
            <person name="Williams A.L."/>
            <person name="Wills P.L."/>
            <person name="Wu J.-R."/>
            <person name="Wu K."/>
            <person name="Yang J."/>
            <person name="DeJong P."/>
            <person name="Bruce D."/>
            <person name="Doggett N.A."/>
            <person name="Deaven L."/>
            <person name="Schmutz J."/>
            <person name="Grimwood J."/>
            <person name="Richardson P."/>
            <person name="Rokhsar D.S."/>
            <person name="Eichler E.E."/>
            <person name="Gilna P."/>
            <person name="Lucas S.M."/>
            <person name="Myers R.M."/>
            <person name="Rubin E.M."/>
            <person name="Pennacchio L.A."/>
        </authorList>
    </citation>
    <scope>NUCLEOTIDE SEQUENCE [LARGE SCALE GENOMIC DNA]</scope>
</reference>
<reference key="4">
    <citation type="journal article" date="2004" name="Genome Res.">
        <title>The status, quality, and expansion of the NIH full-length cDNA project: the Mammalian Gene Collection (MGC).</title>
        <authorList>
            <consortium name="The MGC Project Team"/>
        </authorList>
    </citation>
    <scope>NUCLEOTIDE SEQUENCE [LARGE SCALE MRNA] (ISOFORM 1)</scope>
    <source>
        <tissue>Lung</tissue>
    </source>
</reference>
<reference key="5">
    <citation type="journal article" date="2010" name="J. Cell Sci.">
        <title>Control of ciliogenesis by FOR20, a novel centrosome and pericentriolar satellite protein.</title>
        <authorList>
            <person name="Sedjai F."/>
            <person name="Acquaviva C."/>
            <person name="Chevrier V."/>
            <person name="Chauvin J.P."/>
            <person name="Coppin E."/>
            <person name="Aouane A."/>
            <person name="Coulier F."/>
            <person name="Tolun A."/>
            <person name="Pierres M."/>
            <person name="Birnbaum D."/>
            <person name="Rosnet O."/>
        </authorList>
    </citation>
    <scope>FUNCTION</scope>
    <scope>HOMOOLIGOMERIZATION</scope>
    <scope>SUBCELLULAR LOCATION</scope>
    <scope>MUTAGENESIS OF GLU-49 AND GLU-76</scope>
    <scope>TISSUE SPECIFICITY</scope>
</reference>
<reference key="6">
    <citation type="journal article" date="2013" name="Cell Res.">
        <title>Centrosomal protein FOR20 is essential for S-phase progression by recruiting Plk1 to centrosomes.</title>
        <authorList>
            <person name="Shen M."/>
            <person name="Cai Y."/>
            <person name="Yang Y."/>
            <person name="Yan X."/>
            <person name="Liu X."/>
            <person name="Zhou T."/>
        </authorList>
    </citation>
    <scope>FUNCTION</scope>
    <scope>INTERACTION WITH PLK1</scope>
    <scope>SUBCELLULAR LOCATION</scope>
</reference>
<reference key="7">
    <citation type="journal article" date="2013" name="J. Proteome Res.">
        <title>Toward a comprehensive characterization of a human cancer cell phosphoproteome.</title>
        <authorList>
            <person name="Zhou H."/>
            <person name="Di Palma S."/>
            <person name="Preisinger C."/>
            <person name="Peng M."/>
            <person name="Polat A.N."/>
            <person name="Heck A.J."/>
            <person name="Mohammed S."/>
        </authorList>
    </citation>
    <scope>PHOSPHORYLATION [LARGE SCALE ANALYSIS] AT SER-144</scope>
    <scope>IDENTIFICATION BY MASS SPECTROMETRY [LARGE SCALE ANALYSIS]</scope>
    <source>
        <tissue>Erythroleukemia</tissue>
    </source>
</reference>
<reference key="8">
    <citation type="journal article" date="2016" name="Hum. Mol. Genet.">
        <title>OFIP/KIAA0753 forms a complex with OFD1 and FOR20 at pericentriolar satellites and centrosomes and is mutated in one individual with oral-facial-digital syndrome.</title>
        <authorList>
            <person name="Chevrier V."/>
            <person name="Bruel A.L."/>
            <person name="Van Dam T.J."/>
            <person name="Franco B."/>
            <person name="Lo Scalzo M."/>
            <person name="Lembo F."/>
            <person name="Audebert S."/>
            <person name="Baudelet E."/>
            <person name="Isnardon D."/>
            <person name="Bole A."/>
            <person name="Borg J.P."/>
            <person name="Kuentz P."/>
            <person name="Thevenon J."/>
            <person name="Burglen L."/>
            <person name="Faivre L."/>
            <person name="Riviere J.B."/>
            <person name="Huynen M.A."/>
            <person name="Birnbaum D."/>
            <person name="Rosnet O."/>
            <person name="Thauvin-Robinet C."/>
        </authorList>
    </citation>
    <scope>INTERACTION WITH KIAA0753 AND OFD1</scope>
    <scope>SUBCELLULAR LOCATION</scope>
    <scope>MUTAGENESIS OF GLU-49; ILE-53; GLU-76 AND LEU-106</scope>
</reference>
<keyword id="KW-0025">Alternative splicing</keyword>
<keyword id="KW-0966">Cell projection</keyword>
<keyword id="KW-0970">Cilium biogenesis/degradation</keyword>
<keyword id="KW-0963">Cytoplasm</keyword>
<keyword id="KW-0206">Cytoskeleton</keyword>
<keyword id="KW-0597">Phosphoprotein</keyword>
<keyword id="KW-1267">Proteomics identification</keyword>
<keyword id="KW-1185">Reference proteome</keyword>
<dbReference type="EMBL" id="AY507846">
    <property type="protein sequence ID" value="AAR98812.1"/>
    <property type="molecule type" value="mRNA"/>
</dbReference>
<dbReference type="EMBL" id="AK055715">
    <property type="protein sequence ID" value="BAB70994.1"/>
    <property type="molecule type" value="mRNA"/>
</dbReference>
<dbReference type="EMBL" id="AK056798">
    <property type="protein sequence ID" value="BAG51811.1"/>
    <property type="molecule type" value="mRNA"/>
</dbReference>
<dbReference type="EMBL" id="AC130651">
    <property type="status" value="NOT_ANNOTATED_CDS"/>
    <property type="molecule type" value="Genomic_DNA"/>
</dbReference>
<dbReference type="EMBL" id="BC022321">
    <property type="protein sequence ID" value="AAH22321.1"/>
    <property type="molecule type" value="mRNA"/>
</dbReference>
<dbReference type="CCDS" id="CCDS10567.1">
    <molecule id="Q96NB1-1"/>
</dbReference>
<dbReference type="CCDS" id="CCDS76830.1">
    <molecule id="Q96NB1-2"/>
</dbReference>
<dbReference type="RefSeq" id="NP_001291426.1">
    <molecule id="Q96NB1-2"/>
    <property type="nucleotide sequence ID" value="NM_001304497.2"/>
</dbReference>
<dbReference type="RefSeq" id="NP_653201.1">
    <molecule id="Q96NB1-1"/>
    <property type="nucleotide sequence ID" value="NM_144600.4"/>
</dbReference>
<dbReference type="SMR" id="Q96NB1"/>
<dbReference type="BioGRID" id="125836">
    <property type="interactions" value="50"/>
</dbReference>
<dbReference type="CORUM" id="Q96NB1"/>
<dbReference type="FunCoup" id="Q96NB1">
    <property type="interactions" value="1024"/>
</dbReference>
<dbReference type="IntAct" id="Q96NB1">
    <property type="interactions" value="49"/>
</dbReference>
<dbReference type="STRING" id="9606.ENSP00000461830"/>
<dbReference type="iPTMnet" id="Q96NB1"/>
<dbReference type="PhosphoSitePlus" id="Q96NB1"/>
<dbReference type="BioMuta" id="FOPNL"/>
<dbReference type="DMDM" id="74732531"/>
<dbReference type="jPOST" id="Q96NB1"/>
<dbReference type="MassIVE" id="Q96NB1"/>
<dbReference type="PaxDb" id="9606-ENSP00000255759"/>
<dbReference type="PeptideAtlas" id="Q96NB1"/>
<dbReference type="ProteomicsDB" id="3537"/>
<dbReference type="ProteomicsDB" id="77497">
    <molecule id="Q96NB1-1"/>
</dbReference>
<dbReference type="Pumba" id="Q96NB1"/>
<dbReference type="Antibodypedia" id="51607">
    <property type="antibodies" value="45 antibodies from 11 providers"/>
</dbReference>
<dbReference type="DNASU" id="123811"/>
<dbReference type="Ensembl" id="ENST00000255759.11">
    <molecule id="Q96NB1-1"/>
    <property type="protein sequence ID" value="ENSP00000255759.6"/>
    <property type="gene ID" value="ENSG00000133393.13"/>
</dbReference>
<dbReference type="Ensembl" id="ENST00000573968.5">
    <molecule id="Q96NB1-2"/>
    <property type="protein sequence ID" value="ENSP00000460312.1"/>
    <property type="gene ID" value="ENSG00000133393.13"/>
</dbReference>
<dbReference type="Ensembl" id="ENST00000622266.2">
    <molecule id="Q96NB1-1"/>
    <property type="protein sequence ID" value="ENSP00000481290.1"/>
    <property type="gene ID" value="ENSG00000276914.2"/>
</dbReference>
<dbReference type="Ensembl" id="ENST00000631974.1">
    <molecule id="Q96NB1-2"/>
    <property type="protein sequence ID" value="ENSP00000488488.1"/>
    <property type="gene ID" value="ENSG00000276914.2"/>
</dbReference>
<dbReference type="GeneID" id="123811"/>
<dbReference type="KEGG" id="hsa:123811"/>
<dbReference type="MANE-Select" id="ENST00000255759.11">
    <property type="protein sequence ID" value="ENSP00000255759.6"/>
    <property type="RefSeq nucleotide sequence ID" value="NM_144600.4"/>
    <property type="RefSeq protein sequence ID" value="NP_653201.1"/>
</dbReference>
<dbReference type="UCSC" id="uc002dec.2">
    <molecule id="Q96NB1-1"/>
    <property type="organism name" value="human"/>
</dbReference>
<dbReference type="AGR" id="HGNC:26435"/>
<dbReference type="CTD" id="123811"/>
<dbReference type="DisGeNET" id="123811"/>
<dbReference type="GeneCards" id="CEP20"/>
<dbReference type="HGNC" id="HGNC:26435">
    <property type="gene designation" value="CEP20"/>
</dbReference>
<dbReference type="HPA" id="ENSG00000133393">
    <property type="expression patterns" value="Low tissue specificity"/>
</dbReference>
<dbReference type="MIM" id="617149">
    <property type="type" value="gene"/>
</dbReference>
<dbReference type="neXtProt" id="NX_Q96NB1"/>
<dbReference type="OpenTargets" id="ENSG00000133393"/>
<dbReference type="VEuPathDB" id="HostDB:ENSG00000133393"/>
<dbReference type="eggNOG" id="ENOG502S0C1">
    <property type="taxonomic scope" value="Eukaryota"/>
</dbReference>
<dbReference type="GeneTree" id="ENSGT00390000007773"/>
<dbReference type="InParanoid" id="Q96NB1"/>
<dbReference type="OrthoDB" id="5970631at2759"/>
<dbReference type="PAN-GO" id="Q96NB1">
    <property type="GO annotations" value="4 GO annotations based on evolutionary models"/>
</dbReference>
<dbReference type="PhylomeDB" id="Q96NB1"/>
<dbReference type="TreeFam" id="TF328861"/>
<dbReference type="PathwayCommons" id="Q96NB1"/>
<dbReference type="SignaLink" id="Q96NB1"/>
<dbReference type="BioGRID-ORCS" id="123811">
    <property type="hits" value="16 hits in 1155 CRISPR screens"/>
</dbReference>
<dbReference type="CD-CODE" id="8C2F96ED">
    <property type="entry name" value="Centrosome"/>
</dbReference>
<dbReference type="ChiTaRS" id="FOPNL">
    <property type="organism name" value="human"/>
</dbReference>
<dbReference type="GenomeRNAi" id="123811"/>
<dbReference type="Pharos" id="Q96NB1">
    <property type="development level" value="Tbio"/>
</dbReference>
<dbReference type="PRO" id="PR:Q96NB1"/>
<dbReference type="Proteomes" id="UP000005640">
    <property type="component" value="Chromosome 16"/>
</dbReference>
<dbReference type="RNAct" id="Q96NB1">
    <property type="molecule type" value="protein"/>
</dbReference>
<dbReference type="Bgee" id="ENSG00000133393">
    <property type="expression patterns" value="Expressed in islet of Langerhans and 105 other cell types or tissues"/>
</dbReference>
<dbReference type="ExpressionAtlas" id="Q96NB1">
    <property type="expression patterns" value="baseline and differential"/>
</dbReference>
<dbReference type="GO" id="GO:0034451">
    <property type="term" value="C:centriolar satellite"/>
    <property type="evidence" value="ECO:0000314"/>
    <property type="project" value="HPA"/>
</dbReference>
<dbReference type="GO" id="GO:0005814">
    <property type="term" value="C:centriole"/>
    <property type="evidence" value="ECO:0007669"/>
    <property type="project" value="UniProtKB-SubCell"/>
</dbReference>
<dbReference type="GO" id="GO:0005813">
    <property type="term" value="C:centrosome"/>
    <property type="evidence" value="ECO:0000314"/>
    <property type="project" value="HPA"/>
</dbReference>
<dbReference type="GO" id="GO:0036064">
    <property type="term" value="C:ciliary basal body"/>
    <property type="evidence" value="ECO:0000314"/>
    <property type="project" value="HPA"/>
</dbReference>
<dbReference type="GO" id="GO:0005737">
    <property type="term" value="C:cytoplasm"/>
    <property type="evidence" value="ECO:0007669"/>
    <property type="project" value="UniProtKB-KW"/>
</dbReference>
<dbReference type="GO" id="GO:0031514">
    <property type="term" value="C:motile cilium"/>
    <property type="evidence" value="ECO:0000250"/>
    <property type="project" value="UniProtKB"/>
</dbReference>
<dbReference type="GO" id="GO:0005654">
    <property type="term" value="C:nucleoplasm"/>
    <property type="evidence" value="ECO:0000314"/>
    <property type="project" value="HPA"/>
</dbReference>
<dbReference type="GO" id="GO:0042802">
    <property type="term" value="F:identical protein binding"/>
    <property type="evidence" value="ECO:0000353"/>
    <property type="project" value="IntAct"/>
</dbReference>
<dbReference type="GO" id="GO:0060271">
    <property type="term" value="P:cilium assembly"/>
    <property type="evidence" value="ECO:0000315"/>
    <property type="project" value="UniProtKB"/>
</dbReference>
<dbReference type="GO" id="GO:0034453">
    <property type="term" value="P:microtubule anchoring"/>
    <property type="evidence" value="ECO:0007669"/>
    <property type="project" value="InterPro"/>
</dbReference>
<dbReference type="FunFam" id="1.20.960.40:FF:000002">
    <property type="entry name" value="LisH domain-containing protein FOPNL"/>
    <property type="match status" value="1"/>
</dbReference>
<dbReference type="Gene3D" id="1.20.960.40">
    <property type="match status" value="1"/>
</dbReference>
<dbReference type="InterPro" id="IPR018993">
    <property type="entry name" value="FOP_dimerisation-dom_N"/>
</dbReference>
<dbReference type="InterPro" id="IPR006594">
    <property type="entry name" value="LisH"/>
</dbReference>
<dbReference type="PANTHER" id="PTHR15431:SF21">
    <property type="entry name" value="CENTROSOMAL PROTEIN 20"/>
    <property type="match status" value="1"/>
</dbReference>
<dbReference type="PANTHER" id="PTHR15431">
    <property type="entry name" value="FGFR1 ONCOGENE PARTNER/LISH DOMAIN-CONTAINING PROTEIN"/>
    <property type="match status" value="1"/>
</dbReference>
<dbReference type="Pfam" id="PF09398">
    <property type="entry name" value="FOP_dimer"/>
    <property type="match status" value="1"/>
</dbReference>
<dbReference type="SMART" id="SM00667">
    <property type="entry name" value="LisH"/>
    <property type="match status" value="1"/>
</dbReference>
<dbReference type="PROSITE" id="PS50896">
    <property type="entry name" value="LISH"/>
    <property type="match status" value="1"/>
</dbReference>
<name>CEP20_HUMAN</name>